<dbReference type="EC" id="2.7.2.2"/>
<dbReference type="EMBL" id="AJ938182">
    <property type="protein sequence ID" value="CAI82195.1"/>
    <property type="status" value="ALT_INIT"/>
    <property type="molecule type" value="Genomic_DNA"/>
</dbReference>
<dbReference type="RefSeq" id="WP_000660033.1">
    <property type="nucleotide sequence ID" value="NC_007622.1"/>
</dbReference>
<dbReference type="SMR" id="Q2YWH4"/>
<dbReference type="KEGG" id="sab:SAB2507c"/>
<dbReference type="HOGENOM" id="CLU_076278_0_0_9"/>
<dbReference type="UniPathway" id="UPA00996">
    <property type="reaction ID" value="UER00366"/>
</dbReference>
<dbReference type="GO" id="GO:0005829">
    <property type="term" value="C:cytosol"/>
    <property type="evidence" value="ECO:0007669"/>
    <property type="project" value="TreeGrafter"/>
</dbReference>
<dbReference type="GO" id="GO:0005524">
    <property type="term" value="F:ATP binding"/>
    <property type="evidence" value="ECO:0007669"/>
    <property type="project" value="UniProtKB-KW"/>
</dbReference>
<dbReference type="GO" id="GO:0008804">
    <property type="term" value="F:carbamate kinase activity"/>
    <property type="evidence" value="ECO:0007669"/>
    <property type="project" value="UniProtKB-EC"/>
</dbReference>
<dbReference type="GO" id="GO:0019546">
    <property type="term" value="P:arginine deiminase pathway"/>
    <property type="evidence" value="ECO:0007669"/>
    <property type="project" value="TreeGrafter"/>
</dbReference>
<dbReference type="CDD" id="cd04235">
    <property type="entry name" value="AAK_CK"/>
    <property type="match status" value="1"/>
</dbReference>
<dbReference type="FunFam" id="3.40.1160.10:FF:000007">
    <property type="entry name" value="Carbamate kinase"/>
    <property type="match status" value="1"/>
</dbReference>
<dbReference type="Gene3D" id="3.40.1160.10">
    <property type="entry name" value="Acetylglutamate kinase-like"/>
    <property type="match status" value="1"/>
</dbReference>
<dbReference type="InterPro" id="IPR036393">
    <property type="entry name" value="AceGlu_kinase-like_sf"/>
</dbReference>
<dbReference type="InterPro" id="IPR001048">
    <property type="entry name" value="Asp/Glu/Uridylate_kinase"/>
</dbReference>
<dbReference type="InterPro" id="IPR003964">
    <property type="entry name" value="Carb_kinase"/>
</dbReference>
<dbReference type="NCBIfam" id="TIGR00746">
    <property type="entry name" value="arcC"/>
    <property type="match status" value="1"/>
</dbReference>
<dbReference type="NCBIfam" id="NF009007">
    <property type="entry name" value="PRK12352.1"/>
    <property type="match status" value="1"/>
</dbReference>
<dbReference type="PANTHER" id="PTHR30409">
    <property type="entry name" value="CARBAMATE KINASE"/>
    <property type="match status" value="1"/>
</dbReference>
<dbReference type="PANTHER" id="PTHR30409:SF1">
    <property type="entry name" value="CARBAMATE KINASE-RELATED"/>
    <property type="match status" value="1"/>
</dbReference>
<dbReference type="Pfam" id="PF00696">
    <property type="entry name" value="AA_kinase"/>
    <property type="match status" value="1"/>
</dbReference>
<dbReference type="PIRSF" id="PIRSF000723">
    <property type="entry name" value="Carbamate_kin"/>
    <property type="match status" value="1"/>
</dbReference>
<dbReference type="PRINTS" id="PR01469">
    <property type="entry name" value="CARBMTKINASE"/>
</dbReference>
<dbReference type="SUPFAM" id="SSF53633">
    <property type="entry name" value="Carbamate kinase-like"/>
    <property type="match status" value="1"/>
</dbReference>
<sequence>MKEKIVIALGGNAIQTKEATAEAQQTAIRRAMQNLKPLFDSPARIVISHGNGPQIGSLLIQQAKSNSDTTPAMPLDTCGAMSQGMIGYWLETEINRILTEMNSDRTVGTIVTRVEVDKNDPRFDNPTKPIGPFYTKEEVEELQKEQPDSVFKEDAGRGYRKVVASPLPQSILEHQLIRTLADGKNIVIACGGGGIPVIKKENTYEGVEAVIDKDFASEKLATLIEADTLMILTNVENVFINFNEPNQQQIDDIDVATLKKYVAQGKFAEGSMLPKIEAAIRFVESGENKKVIITNLEQAYEALIGNKGTHIHM</sequence>
<accession>Q2YWH4</accession>
<gene>
    <name type="primary">arcC2</name>
    <name type="ordered locus">SAB2507c</name>
</gene>
<proteinExistence type="inferred from homology"/>
<comment type="catalytic activity">
    <reaction>
        <text>hydrogencarbonate + NH4(+) + ATP = carbamoyl phosphate + ADP + H2O + H(+)</text>
        <dbReference type="Rhea" id="RHEA:10152"/>
        <dbReference type="ChEBI" id="CHEBI:15377"/>
        <dbReference type="ChEBI" id="CHEBI:15378"/>
        <dbReference type="ChEBI" id="CHEBI:17544"/>
        <dbReference type="ChEBI" id="CHEBI:28938"/>
        <dbReference type="ChEBI" id="CHEBI:30616"/>
        <dbReference type="ChEBI" id="CHEBI:58228"/>
        <dbReference type="ChEBI" id="CHEBI:456216"/>
        <dbReference type="EC" id="2.7.2.2"/>
    </reaction>
</comment>
<comment type="pathway">
    <text>Metabolic intermediate metabolism; carbamoyl phosphate degradation; CO(2) and NH(3) from carbamoyl phosphate: step 1/1.</text>
</comment>
<comment type="subcellular location">
    <subcellularLocation>
        <location evidence="1">Cytoplasm</location>
    </subcellularLocation>
</comment>
<comment type="similarity">
    <text evidence="1">Belongs to the carbamate kinase family.</text>
</comment>
<comment type="sequence caution" evidence="1">
    <conflict type="erroneous initiation">
        <sequence resource="EMBL-CDS" id="CAI82195"/>
    </conflict>
</comment>
<name>ARCC2_STAAB</name>
<protein>
    <recommendedName>
        <fullName>Carbamate kinase 2</fullName>
        <ecNumber>2.7.2.2</ecNumber>
    </recommendedName>
</protein>
<keyword id="KW-0056">Arginine metabolism</keyword>
<keyword id="KW-0067">ATP-binding</keyword>
<keyword id="KW-0963">Cytoplasm</keyword>
<keyword id="KW-0418">Kinase</keyword>
<keyword id="KW-0547">Nucleotide-binding</keyword>
<keyword id="KW-0808">Transferase</keyword>
<evidence type="ECO:0000305" key="1"/>
<organism>
    <name type="scientific">Staphylococcus aureus (strain bovine RF122 / ET3-1)</name>
    <dbReference type="NCBI Taxonomy" id="273036"/>
    <lineage>
        <taxon>Bacteria</taxon>
        <taxon>Bacillati</taxon>
        <taxon>Bacillota</taxon>
        <taxon>Bacilli</taxon>
        <taxon>Bacillales</taxon>
        <taxon>Staphylococcaceae</taxon>
        <taxon>Staphylococcus</taxon>
    </lineage>
</organism>
<feature type="chain" id="PRO_0000269233" description="Carbamate kinase 2">
    <location>
        <begin position="1"/>
        <end position="313"/>
    </location>
</feature>
<reference key="1">
    <citation type="journal article" date="2007" name="PLoS ONE">
        <title>Molecular correlates of host specialization in Staphylococcus aureus.</title>
        <authorList>
            <person name="Herron-Olson L."/>
            <person name="Fitzgerald J.R."/>
            <person name="Musser J.M."/>
            <person name="Kapur V."/>
        </authorList>
    </citation>
    <scope>NUCLEOTIDE SEQUENCE [LARGE SCALE GENOMIC DNA]</scope>
    <source>
        <strain>bovine RF122 / ET3-1</strain>
    </source>
</reference>